<protein>
    <recommendedName>
        <fullName>Protein V2</fullName>
    </recommendedName>
</protein>
<name>AV2_TYLCI</name>
<feature type="chain" id="PRO_0000222277" description="Protein V2">
    <location>
        <begin position="1"/>
        <end position="116"/>
    </location>
</feature>
<feature type="mutagenesis site" description="Complete loss of suppression of silencing and interaction with Solanum lycopersicum SGS3; when associated with S-86." evidence="2 3">
    <original>C</original>
    <variation>S</variation>
    <location>
        <position position="84"/>
    </location>
</feature>
<feature type="mutagenesis site" description="Complete loss of suppression of silencing and interaction with Solanum lycopersicum SGS3; when associated with S-84." evidence="2 3">
    <original>C</original>
    <variation>S</variation>
    <location>
        <position position="86"/>
    </location>
</feature>
<reference key="1">
    <citation type="journal article" date="1991" name="Virology">
        <title>Tomato yellow leaf curl virus: a whitefly-transmitted geminivirus with a single genomic component.</title>
        <authorList>
            <person name="Navot N."/>
            <person name="Pichersky E."/>
            <person name="Zeidan M."/>
            <person name="Zamir D."/>
            <person name="Czosnek H."/>
        </authorList>
    </citation>
    <scope>NUCLEOTIDE SEQUENCE [GENOMIC DNA]</scope>
</reference>
<reference key="2">
    <citation type="journal article" date="2001" name="Virology">
        <title>Functional analysis of proteins involved in movement of the monopartite begomovirus, Tomato yellow leaf curl virus.</title>
        <authorList>
            <person name="Rojas M.R."/>
            <person name="Jiang H."/>
            <person name="Salati R."/>
            <person name="Xoconostle-Cazares B."/>
            <person name="Sudarshana M.R."/>
            <person name="Lucas W.J."/>
            <person name="Gilbertson R.L."/>
        </authorList>
    </citation>
    <scope>SUBCELLULAR LOCATION</scope>
    <source>
        <strain>Isolate Dominican Republic</strain>
    </source>
</reference>
<reference key="3">
    <citation type="journal article" date="2007" name="Virology">
        <title>Suppressor of RNA silencing encoded by Tomato yellow leaf curl virus-Israel.</title>
        <authorList>
            <person name="Zrachya A."/>
            <person name="Glick E."/>
            <person name="Levy Y."/>
            <person name="Arazi T."/>
            <person name="Citovsky V."/>
            <person name="Gafni Y."/>
        </authorList>
    </citation>
    <scope>FUNCTION</scope>
    <scope>SUBCELLULAR LOCATION</scope>
    <scope>MUTAGENESIS OF CYS-84 AND CYS-86</scope>
</reference>
<reference key="4">
    <citation type="journal article" date="2008" name="Proc. Natl. Acad. Sci. U.S.A.">
        <title>Interaction with host SGS3 is required for suppression of RNA silencing by tomato yellow leaf curl virus V2 protein.</title>
        <authorList>
            <person name="Glick E."/>
            <person name="Zrachya A."/>
            <person name="Levy Y."/>
            <person name="Mett A."/>
            <person name="Gidoni D."/>
            <person name="Belausov E."/>
            <person name="Citovsky V."/>
            <person name="Gafni Y."/>
        </authorList>
    </citation>
    <scope>FUNCTION</scope>
    <scope>INTERACTION WITH SOLANUM LYCOPERSICUM SGS3</scope>
    <scope>MUTAGENESIS OF CYS-84 AND CYS-86</scope>
</reference>
<evidence type="ECO:0000269" key="1">
    <source>
    </source>
</evidence>
<evidence type="ECO:0000269" key="2">
    <source>
    </source>
</evidence>
<evidence type="ECO:0000269" key="3">
    <source>
    </source>
</evidence>
<evidence type="ECO:0000305" key="4"/>
<sequence>MWDPLLNEFPESVHGFRCMLAIKYLQSVEETYEPNTLGHDLIRDLISVVRARDYVEATRRYNHFHARLEGSPKAELRQPIQQPCCCPHCPRHKQATIMDVQAHVPKAQNIQNVSKP</sequence>
<proteinExistence type="evidence at protein level"/>
<organism>
    <name type="scientific">Tomato yellow leaf curl virus (strain Israel)</name>
    <name type="common">TYLCV</name>
    <dbReference type="NCBI Taxonomy" id="66366"/>
    <lineage>
        <taxon>Viruses</taxon>
        <taxon>Monodnaviria</taxon>
        <taxon>Shotokuvirae</taxon>
        <taxon>Cressdnaviricota</taxon>
        <taxon>Repensiviricetes</taxon>
        <taxon>Geplafuvirales</taxon>
        <taxon>Geminiviridae</taxon>
        <taxon>Begomovirus</taxon>
        <taxon>Tomato yellow leaf curl virus</taxon>
    </lineage>
</organism>
<gene>
    <name type="ORF">V2</name>
</gene>
<organismHost>
    <name type="scientific">Cynanchum acutum</name>
    <dbReference type="NCBI Taxonomy" id="185024"/>
</organismHost>
<organismHost>
    <name type="scientific">Malva parviflora</name>
    <name type="common">Little mallow</name>
    <name type="synonym">Cheeseweed mallow</name>
    <dbReference type="NCBI Taxonomy" id="145753"/>
</organismHost>
<organismHost>
    <name type="scientific">Solanum lycopersicum</name>
    <name type="common">Tomato</name>
    <name type="synonym">Lycopersicon esculentum</name>
    <dbReference type="NCBI Taxonomy" id="4081"/>
</organismHost>
<accession>P27269</accession>
<comment type="function">
    <text evidence="2 3">Through its interaction with host SGS3, acts as a suppressor of RNA-mediated gene silencing, also known as post-transcriptional gene silencing (PTGS), a mechanism of plant viral defense that limits the accumulation of viral RNAs.</text>
</comment>
<comment type="subunit">
    <text evidence="3">Interacts with host SGS3.</text>
</comment>
<comment type="subcellular location">
    <subcellularLocation>
        <location evidence="1 2">Host cytoplasm</location>
        <location evidence="1 2">Host perinuclear region</location>
    </subcellularLocation>
    <text>Accumulates in inclusion bodies in the cell periphery. May interact with the ER network from the perinuclear region out to the cell periphery.</text>
</comment>
<comment type="similarity">
    <text evidence="4">Belongs to the geminiviridae protein AV2/V2 family.</text>
</comment>
<keyword id="KW-1035">Host cytoplasm</keyword>
<keyword id="KW-0945">Host-virus interaction</keyword>
<keyword id="KW-1090">Inhibition of host innate immune response by virus</keyword>
<keyword id="KW-1185">Reference proteome</keyword>
<keyword id="KW-0941">Suppressor of RNA silencing</keyword>
<keyword id="KW-0899">Viral immunoevasion</keyword>
<dbReference type="EMBL" id="X15656">
    <property type="protein sequence ID" value="CAA33687.1"/>
    <property type="molecule type" value="Genomic_DNA"/>
</dbReference>
<dbReference type="PIR" id="E40779">
    <property type="entry name" value="QQCVB1"/>
</dbReference>
<dbReference type="RefSeq" id="NP_658991.1">
    <property type="nucleotide sequence ID" value="NC_004005.1"/>
</dbReference>
<dbReference type="GeneID" id="949136"/>
<dbReference type="KEGG" id="vg:949136"/>
<dbReference type="Proteomes" id="UP000007547">
    <property type="component" value="Genome"/>
</dbReference>
<dbReference type="GO" id="GO:0044220">
    <property type="term" value="C:host cell perinuclear region of cytoplasm"/>
    <property type="evidence" value="ECO:0007669"/>
    <property type="project" value="UniProtKB-SubCell"/>
</dbReference>
<dbReference type="GO" id="GO:0060967">
    <property type="term" value="P:negative regulation of gene silencing by regulatory ncRNA"/>
    <property type="evidence" value="ECO:0007669"/>
    <property type="project" value="InterPro"/>
</dbReference>
<dbReference type="GO" id="GO:0052170">
    <property type="term" value="P:symbiont-mediated suppression of host innate immune response"/>
    <property type="evidence" value="ECO:0007669"/>
    <property type="project" value="UniProtKB-KW"/>
</dbReference>
<dbReference type="InterPro" id="IPR002511">
    <property type="entry name" value="Gemini_V2"/>
</dbReference>
<dbReference type="InterPro" id="IPR005159">
    <property type="entry name" value="WCCH"/>
</dbReference>
<dbReference type="Pfam" id="PF01524">
    <property type="entry name" value="Gemini_V2"/>
    <property type="match status" value="1"/>
</dbReference>
<dbReference type="Pfam" id="PF03716">
    <property type="entry name" value="WCCH"/>
    <property type="match status" value="1"/>
</dbReference>